<keyword id="KW-0004">4Fe-4S</keyword>
<keyword id="KW-0963">Cytoplasm</keyword>
<keyword id="KW-0408">Iron</keyword>
<keyword id="KW-0411">Iron-sulfur</keyword>
<keyword id="KW-0479">Metal-binding</keyword>
<keyword id="KW-1185">Reference proteome</keyword>
<keyword id="KW-0949">S-adenosyl-L-methionine</keyword>
<keyword id="KW-0808">Transferase</keyword>
<comment type="function">
    <text evidence="1">Catalyzes the radical-mediated insertion of two sulfur atoms into the C-6 and C-8 positions of the octanoyl moiety bound to the lipoyl domains of lipoate-dependent enzymes, thereby converting the octanoylated domains into lipoylated derivatives.</text>
</comment>
<comment type="catalytic activity">
    <reaction evidence="1">
        <text>[[Fe-S] cluster scaffold protein carrying a second [4Fe-4S](2+) cluster] + N(6)-octanoyl-L-lysyl-[protein] + 2 oxidized [2Fe-2S]-[ferredoxin] + 2 S-adenosyl-L-methionine + 4 H(+) = [[Fe-S] cluster scaffold protein] + N(6)-[(R)-dihydrolipoyl]-L-lysyl-[protein] + 4 Fe(3+) + 2 hydrogen sulfide + 2 5'-deoxyadenosine + 2 L-methionine + 2 reduced [2Fe-2S]-[ferredoxin]</text>
        <dbReference type="Rhea" id="RHEA:16585"/>
        <dbReference type="Rhea" id="RHEA-COMP:9928"/>
        <dbReference type="Rhea" id="RHEA-COMP:10000"/>
        <dbReference type="Rhea" id="RHEA-COMP:10001"/>
        <dbReference type="Rhea" id="RHEA-COMP:10475"/>
        <dbReference type="Rhea" id="RHEA-COMP:14568"/>
        <dbReference type="Rhea" id="RHEA-COMP:14569"/>
        <dbReference type="ChEBI" id="CHEBI:15378"/>
        <dbReference type="ChEBI" id="CHEBI:17319"/>
        <dbReference type="ChEBI" id="CHEBI:29034"/>
        <dbReference type="ChEBI" id="CHEBI:29919"/>
        <dbReference type="ChEBI" id="CHEBI:33722"/>
        <dbReference type="ChEBI" id="CHEBI:33737"/>
        <dbReference type="ChEBI" id="CHEBI:33738"/>
        <dbReference type="ChEBI" id="CHEBI:57844"/>
        <dbReference type="ChEBI" id="CHEBI:59789"/>
        <dbReference type="ChEBI" id="CHEBI:78809"/>
        <dbReference type="ChEBI" id="CHEBI:83100"/>
        <dbReference type="EC" id="2.8.1.8"/>
    </reaction>
</comment>
<comment type="cofactor">
    <cofactor evidence="1">
        <name>[4Fe-4S] cluster</name>
        <dbReference type="ChEBI" id="CHEBI:49883"/>
    </cofactor>
    <text evidence="1">Binds 2 [4Fe-4S] clusters per subunit. One cluster is coordinated with 3 cysteines and an exchangeable S-adenosyl-L-methionine.</text>
</comment>
<comment type="pathway">
    <text evidence="1">Protein modification; protein lipoylation via endogenous pathway; protein N(6)-(lipoyl)lysine from octanoyl-[acyl-carrier-protein]: step 2/2.</text>
</comment>
<comment type="subcellular location">
    <subcellularLocation>
        <location evidence="1">Cytoplasm</location>
    </subcellularLocation>
</comment>
<comment type="similarity">
    <text evidence="1">Belongs to the radical SAM superfamily. Lipoyl synthase family.</text>
</comment>
<accession>A1WF48</accession>
<dbReference type="EC" id="2.8.1.8" evidence="1"/>
<dbReference type="EMBL" id="CP000542">
    <property type="protein sequence ID" value="ABM56255.1"/>
    <property type="molecule type" value="Genomic_DNA"/>
</dbReference>
<dbReference type="RefSeq" id="WP_011808271.1">
    <property type="nucleotide sequence ID" value="NC_008786.1"/>
</dbReference>
<dbReference type="SMR" id="A1WF48"/>
<dbReference type="STRING" id="391735.Veis_0470"/>
<dbReference type="GeneID" id="76459180"/>
<dbReference type="KEGG" id="vei:Veis_0470"/>
<dbReference type="eggNOG" id="COG0320">
    <property type="taxonomic scope" value="Bacteria"/>
</dbReference>
<dbReference type="HOGENOM" id="CLU_033144_2_1_4"/>
<dbReference type="OrthoDB" id="9787898at2"/>
<dbReference type="UniPathway" id="UPA00538">
    <property type="reaction ID" value="UER00593"/>
</dbReference>
<dbReference type="Proteomes" id="UP000000374">
    <property type="component" value="Chromosome"/>
</dbReference>
<dbReference type="GO" id="GO:0005737">
    <property type="term" value="C:cytoplasm"/>
    <property type="evidence" value="ECO:0007669"/>
    <property type="project" value="UniProtKB-SubCell"/>
</dbReference>
<dbReference type="GO" id="GO:0051539">
    <property type="term" value="F:4 iron, 4 sulfur cluster binding"/>
    <property type="evidence" value="ECO:0007669"/>
    <property type="project" value="UniProtKB-UniRule"/>
</dbReference>
<dbReference type="GO" id="GO:0016992">
    <property type="term" value="F:lipoate synthase activity"/>
    <property type="evidence" value="ECO:0007669"/>
    <property type="project" value="UniProtKB-UniRule"/>
</dbReference>
<dbReference type="GO" id="GO:0046872">
    <property type="term" value="F:metal ion binding"/>
    <property type="evidence" value="ECO:0007669"/>
    <property type="project" value="UniProtKB-KW"/>
</dbReference>
<dbReference type="CDD" id="cd01335">
    <property type="entry name" value="Radical_SAM"/>
    <property type="match status" value="1"/>
</dbReference>
<dbReference type="FunFam" id="3.20.20.70:FF:000040">
    <property type="entry name" value="Lipoyl synthase"/>
    <property type="match status" value="1"/>
</dbReference>
<dbReference type="Gene3D" id="3.20.20.70">
    <property type="entry name" value="Aldolase class I"/>
    <property type="match status" value="1"/>
</dbReference>
<dbReference type="HAMAP" id="MF_00206">
    <property type="entry name" value="Lipoyl_synth"/>
    <property type="match status" value="1"/>
</dbReference>
<dbReference type="InterPro" id="IPR013785">
    <property type="entry name" value="Aldolase_TIM"/>
</dbReference>
<dbReference type="InterPro" id="IPR006638">
    <property type="entry name" value="Elp3/MiaA/NifB-like_rSAM"/>
</dbReference>
<dbReference type="InterPro" id="IPR031691">
    <property type="entry name" value="LIAS_N"/>
</dbReference>
<dbReference type="InterPro" id="IPR003698">
    <property type="entry name" value="Lipoyl_synth"/>
</dbReference>
<dbReference type="InterPro" id="IPR007197">
    <property type="entry name" value="rSAM"/>
</dbReference>
<dbReference type="NCBIfam" id="TIGR00510">
    <property type="entry name" value="lipA"/>
    <property type="match status" value="1"/>
</dbReference>
<dbReference type="NCBIfam" id="NF004019">
    <property type="entry name" value="PRK05481.1"/>
    <property type="match status" value="1"/>
</dbReference>
<dbReference type="NCBIfam" id="NF009544">
    <property type="entry name" value="PRK12928.1"/>
    <property type="match status" value="1"/>
</dbReference>
<dbReference type="PANTHER" id="PTHR10949">
    <property type="entry name" value="LIPOYL SYNTHASE"/>
    <property type="match status" value="1"/>
</dbReference>
<dbReference type="PANTHER" id="PTHR10949:SF0">
    <property type="entry name" value="LIPOYL SYNTHASE, MITOCHONDRIAL"/>
    <property type="match status" value="1"/>
</dbReference>
<dbReference type="Pfam" id="PF16881">
    <property type="entry name" value="LIAS_N"/>
    <property type="match status" value="1"/>
</dbReference>
<dbReference type="Pfam" id="PF04055">
    <property type="entry name" value="Radical_SAM"/>
    <property type="match status" value="1"/>
</dbReference>
<dbReference type="PIRSF" id="PIRSF005963">
    <property type="entry name" value="Lipoyl_synth"/>
    <property type="match status" value="1"/>
</dbReference>
<dbReference type="SFLD" id="SFLDF00271">
    <property type="entry name" value="lipoyl_synthase"/>
    <property type="match status" value="1"/>
</dbReference>
<dbReference type="SFLD" id="SFLDS00029">
    <property type="entry name" value="Radical_SAM"/>
    <property type="match status" value="1"/>
</dbReference>
<dbReference type="SMART" id="SM00729">
    <property type="entry name" value="Elp3"/>
    <property type="match status" value="1"/>
</dbReference>
<dbReference type="SUPFAM" id="SSF102114">
    <property type="entry name" value="Radical SAM enzymes"/>
    <property type="match status" value="1"/>
</dbReference>
<dbReference type="PROSITE" id="PS51918">
    <property type="entry name" value="RADICAL_SAM"/>
    <property type="match status" value="1"/>
</dbReference>
<reference key="1">
    <citation type="submission" date="2006-12" db="EMBL/GenBank/DDBJ databases">
        <title>Complete sequence of chromosome 1 of Verminephrobacter eiseniae EF01-2.</title>
        <authorList>
            <person name="Copeland A."/>
            <person name="Lucas S."/>
            <person name="Lapidus A."/>
            <person name="Barry K."/>
            <person name="Detter J.C."/>
            <person name="Glavina del Rio T."/>
            <person name="Dalin E."/>
            <person name="Tice H."/>
            <person name="Pitluck S."/>
            <person name="Chertkov O."/>
            <person name="Brettin T."/>
            <person name="Bruce D."/>
            <person name="Han C."/>
            <person name="Tapia R."/>
            <person name="Gilna P."/>
            <person name="Schmutz J."/>
            <person name="Larimer F."/>
            <person name="Land M."/>
            <person name="Hauser L."/>
            <person name="Kyrpides N."/>
            <person name="Kim E."/>
            <person name="Stahl D."/>
            <person name="Richardson P."/>
        </authorList>
    </citation>
    <scope>NUCLEOTIDE SEQUENCE [LARGE SCALE GENOMIC DNA]</scope>
    <source>
        <strain>EF01-2</strain>
    </source>
</reference>
<proteinExistence type="inferred from homology"/>
<evidence type="ECO:0000255" key="1">
    <source>
        <dbReference type="HAMAP-Rule" id="MF_00206"/>
    </source>
</evidence>
<evidence type="ECO:0000255" key="2">
    <source>
        <dbReference type="PROSITE-ProRule" id="PRU01266"/>
    </source>
</evidence>
<feature type="chain" id="PRO_0000325320" description="Lipoyl synthase">
    <location>
        <begin position="1"/>
        <end position="332"/>
    </location>
</feature>
<feature type="domain" description="Radical SAM core" evidence="2">
    <location>
        <begin position="85"/>
        <end position="303"/>
    </location>
</feature>
<feature type="binding site" evidence="1">
    <location>
        <position position="74"/>
    </location>
    <ligand>
        <name>[4Fe-4S] cluster</name>
        <dbReference type="ChEBI" id="CHEBI:49883"/>
        <label>1</label>
    </ligand>
</feature>
<feature type="binding site" evidence="1">
    <location>
        <position position="79"/>
    </location>
    <ligand>
        <name>[4Fe-4S] cluster</name>
        <dbReference type="ChEBI" id="CHEBI:49883"/>
        <label>1</label>
    </ligand>
</feature>
<feature type="binding site" evidence="1">
    <location>
        <position position="85"/>
    </location>
    <ligand>
        <name>[4Fe-4S] cluster</name>
        <dbReference type="ChEBI" id="CHEBI:49883"/>
        <label>1</label>
    </ligand>
</feature>
<feature type="binding site" evidence="1">
    <location>
        <position position="100"/>
    </location>
    <ligand>
        <name>[4Fe-4S] cluster</name>
        <dbReference type="ChEBI" id="CHEBI:49883"/>
        <label>2</label>
        <note>4Fe-4S-S-AdoMet</note>
    </ligand>
</feature>
<feature type="binding site" evidence="1">
    <location>
        <position position="104"/>
    </location>
    <ligand>
        <name>[4Fe-4S] cluster</name>
        <dbReference type="ChEBI" id="CHEBI:49883"/>
        <label>2</label>
        <note>4Fe-4S-S-AdoMet</note>
    </ligand>
</feature>
<feature type="binding site" evidence="1">
    <location>
        <position position="107"/>
    </location>
    <ligand>
        <name>[4Fe-4S] cluster</name>
        <dbReference type="ChEBI" id="CHEBI:49883"/>
        <label>2</label>
        <note>4Fe-4S-S-AdoMet</note>
    </ligand>
</feature>
<feature type="binding site" evidence="1">
    <location>
        <position position="314"/>
    </location>
    <ligand>
        <name>[4Fe-4S] cluster</name>
        <dbReference type="ChEBI" id="CHEBI:49883"/>
        <label>1</label>
    </ligand>
</feature>
<gene>
    <name evidence="1" type="primary">lipA</name>
    <name type="ordered locus">Veis_0470</name>
</gene>
<protein>
    <recommendedName>
        <fullName evidence="1">Lipoyl synthase</fullName>
        <ecNumber evidence="1">2.8.1.8</ecNumber>
    </recommendedName>
    <alternativeName>
        <fullName evidence="1">Lip-syn</fullName>
        <shortName evidence="1">LS</shortName>
    </alternativeName>
    <alternativeName>
        <fullName evidence="1">Lipoate synthase</fullName>
    </alternativeName>
    <alternativeName>
        <fullName evidence="1">Lipoic acid synthase</fullName>
    </alternativeName>
    <alternativeName>
        <fullName evidence="1">Sulfur insertion protein LipA</fullName>
    </alternativeName>
</protein>
<sequence length="332" mass="37023">MASADRQMIGDATLAYDPRAKQKAAAKLARIPIKVEPGERLKKPDWIRVKAASPGTRFDDIKRILREHRLHTVCEEASCPNIGECFGKGTATFMIMGDKCTRRCPFCDVGHGRPDPLDQDEPMNLARTVAALALEYVVITSVDRDDLRDGGSGHFVDCIQSIRKLSPQTRIEILVPDFRGRDDRALAILQAAPPDVMNHNLETAPRLYPQARPGSDYRFSLNLLKKFKALHPTVPTKSGIMVGLGETDEEILQVMRDMRAHGIEMLTIGQYLAPSSSHLPVRRYVHPDDFRMFEQEAYRMGFSHAAVGAMVRSSYHADRQAQAAGLHVNAPK</sequence>
<name>LIPA_VEREI</name>
<organism>
    <name type="scientific">Verminephrobacter eiseniae (strain EF01-2)</name>
    <dbReference type="NCBI Taxonomy" id="391735"/>
    <lineage>
        <taxon>Bacteria</taxon>
        <taxon>Pseudomonadati</taxon>
        <taxon>Pseudomonadota</taxon>
        <taxon>Betaproteobacteria</taxon>
        <taxon>Burkholderiales</taxon>
        <taxon>Comamonadaceae</taxon>
        <taxon>Verminephrobacter</taxon>
    </lineage>
</organism>